<sequence>MRIYKDIITGDEMFSDTYKMKLVDEVIYEVTGKLVTRTHGDVQIEGFNPSAEEADEGTDAATESGVDIVLNHRLMETYAFGDKKSYTLYLKDYMKKLVAKLEETAPDQVDVFKTNMNKVMKDILGRFKELQFFTGESMDCDGMVAMCEYRDINGVSTPVMMFFKHGLLEEKF</sequence>
<feature type="chain" id="PRO_0000211286" description="Translationally-controlled tumor protein homolog">
    <location>
        <begin position="1"/>
        <end position="172"/>
    </location>
</feature>
<feature type="domain" description="TCTP" evidence="2">
    <location>
        <begin position="1"/>
        <end position="172"/>
    </location>
</feature>
<gene>
    <name type="primary">Tctp</name>
</gene>
<comment type="function">
    <text evidence="1">Involved in calcium binding and microtubule stabilization.</text>
</comment>
<comment type="subcellular location">
    <subcellularLocation>
        <location evidence="1">Cytoplasm</location>
    </subcellularLocation>
</comment>
<comment type="similarity">
    <text evidence="2">Belongs to the TCTP family.</text>
</comment>
<keyword id="KW-0106">Calcium</keyword>
<keyword id="KW-0963">Cytoplasm</keyword>
<dbReference type="EMBL" id="AB189028">
    <property type="protein sequence ID" value="BAD52260.1"/>
    <property type="molecule type" value="mRNA"/>
</dbReference>
<dbReference type="RefSeq" id="NP_001292427.1">
    <property type="nucleotide sequence ID" value="NM_001305498.1"/>
</dbReference>
<dbReference type="SMR" id="Q60FS1"/>
<dbReference type="GeneID" id="105389397"/>
<dbReference type="KEGG" id="pxy:105389397"/>
<dbReference type="CTD" id="41341"/>
<dbReference type="OrthoDB" id="10248936at2759"/>
<dbReference type="GO" id="GO:0005737">
    <property type="term" value="C:cytoplasm"/>
    <property type="evidence" value="ECO:0007669"/>
    <property type="project" value="UniProtKB-SubCell"/>
</dbReference>
<dbReference type="GO" id="GO:0005509">
    <property type="term" value="F:calcium ion binding"/>
    <property type="evidence" value="ECO:0007669"/>
    <property type="project" value="TreeGrafter"/>
</dbReference>
<dbReference type="FunFam" id="2.170.150.10:FF:000002">
    <property type="entry name" value="Translationally-controlled tumor protein homolog"/>
    <property type="match status" value="1"/>
</dbReference>
<dbReference type="Gene3D" id="2.170.150.10">
    <property type="entry name" value="Metal Binding Protein, Guanine Nucleotide Exchange Factor, Chain A"/>
    <property type="match status" value="1"/>
</dbReference>
<dbReference type="InterPro" id="IPR011057">
    <property type="entry name" value="Mss4-like_sf"/>
</dbReference>
<dbReference type="InterPro" id="IPR011323">
    <property type="entry name" value="Mss4/transl-control_tumour"/>
</dbReference>
<dbReference type="InterPro" id="IPR034737">
    <property type="entry name" value="TCTP"/>
</dbReference>
<dbReference type="InterPro" id="IPR018103">
    <property type="entry name" value="Translation_control_tumour_CS"/>
</dbReference>
<dbReference type="InterPro" id="IPR018105">
    <property type="entry name" value="Translational_control_tumour_p"/>
</dbReference>
<dbReference type="PANTHER" id="PTHR11991">
    <property type="entry name" value="TRANSLATIONALLY CONTROLLED TUMOR PROTEIN-RELATED"/>
    <property type="match status" value="1"/>
</dbReference>
<dbReference type="PANTHER" id="PTHR11991:SF0">
    <property type="entry name" value="TRANSLATIONALLY-CONTROLLED TUMOR PROTEIN"/>
    <property type="match status" value="1"/>
</dbReference>
<dbReference type="Pfam" id="PF00838">
    <property type="entry name" value="TCTP"/>
    <property type="match status" value="1"/>
</dbReference>
<dbReference type="PRINTS" id="PR01653">
    <property type="entry name" value="TCTPROTEIN"/>
</dbReference>
<dbReference type="SUPFAM" id="SSF51316">
    <property type="entry name" value="Mss4-like"/>
    <property type="match status" value="1"/>
</dbReference>
<dbReference type="PROSITE" id="PS01002">
    <property type="entry name" value="TCTP_1"/>
    <property type="match status" value="1"/>
</dbReference>
<dbReference type="PROSITE" id="PS01003">
    <property type="entry name" value="TCTP_2"/>
    <property type="match status" value="1"/>
</dbReference>
<dbReference type="PROSITE" id="PS51797">
    <property type="entry name" value="TCTP_3"/>
    <property type="match status" value="1"/>
</dbReference>
<reference key="1">
    <citation type="submission" date="2004-08" db="EMBL/GenBank/DDBJ databases">
        <title>Construction and EST analysis of full-length cDNA libraries from immunized diamond back moth, Plutella xylostella.</title>
        <authorList>
            <person name="Eum J.H."/>
            <person name="Yoe S.M."/>
            <person name="Seo Y.R."/>
            <person name="Kang S.W."/>
            <person name="Han S.S."/>
        </authorList>
    </citation>
    <scope>NUCLEOTIDE SEQUENCE [LARGE SCALE MRNA]</scope>
</reference>
<proteinExistence type="evidence at transcript level"/>
<organism>
    <name type="scientific">Plutella xylostella</name>
    <name type="common">Diamondback moth</name>
    <name type="synonym">Plutella maculipennis</name>
    <dbReference type="NCBI Taxonomy" id="51655"/>
    <lineage>
        <taxon>Eukaryota</taxon>
        <taxon>Metazoa</taxon>
        <taxon>Ecdysozoa</taxon>
        <taxon>Arthropoda</taxon>
        <taxon>Hexapoda</taxon>
        <taxon>Insecta</taxon>
        <taxon>Pterygota</taxon>
        <taxon>Neoptera</taxon>
        <taxon>Endopterygota</taxon>
        <taxon>Lepidoptera</taxon>
        <taxon>Glossata</taxon>
        <taxon>Ditrysia</taxon>
        <taxon>Yponomeutoidea</taxon>
        <taxon>Plutellidae</taxon>
        <taxon>Plutella</taxon>
    </lineage>
</organism>
<name>TCTP_PLUXY</name>
<accession>Q60FS1</accession>
<protein>
    <recommendedName>
        <fullName>Translationally-controlled tumor protein homolog</fullName>
        <shortName>TCTP</shortName>
    </recommendedName>
</protein>
<evidence type="ECO:0000250" key="1"/>
<evidence type="ECO:0000255" key="2">
    <source>
        <dbReference type="PROSITE-ProRule" id="PRU01133"/>
    </source>
</evidence>